<feature type="chain" id="PRO_0000090979" description="Elongation factor 1-alpha">
    <location>
        <begin position="1"/>
        <end position="422"/>
    </location>
</feature>
<feature type="domain" description="tr-type G">
    <location>
        <begin position="5"/>
        <end position="221"/>
    </location>
</feature>
<feature type="region of interest" description="G1" evidence="1">
    <location>
        <begin position="14"/>
        <end position="21"/>
    </location>
</feature>
<feature type="region of interest" description="G2" evidence="1">
    <location>
        <begin position="70"/>
        <end position="74"/>
    </location>
</feature>
<feature type="region of interest" description="G3" evidence="1">
    <location>
        <begin position="91"/>
        <end position="94"/>
    </location>
</feature>
<feature type="region of interest" description="G4" evidence="1">
    <location>
        <begin position="146"/>
        <end position="149"/>
    </location>
</feature>
<feature type="region of interest" description="G5" evidence="1">
    <location>
        <begin position="185"/>
        <end position="187"/>
    </location>
</feature>
<feature type="binding site" evidence="2">
    <location>
        <begin position="14"/>
        <end position="21"/>
    </location>
    <ligand>
        <name>GTP</name>
        <dbReference type="ChEBI" id="CHEBI:37565"/>
    </ligand>
</feature>
<feature type="binding site" evidence="2">
    <location>
        <position position="21"/>
    </location>
    <ligand>
        <name>Mg(2+)</name>
        <dbReference type="ChEBI" id="CHEBI:18420"/>
    </ligand>
</feature>
<feature type="binding site" evidence="2">
    <location>
        <begin position="91"/>
        <end position="95"/>
    </location>
    <ligand>
        <name>GTP</name>
        <dbReference type="ChEBI" id="CHEBI:37565"/>
    </ligand>
</feature>
<feature type="binding site" evidence="2">
    <location>
        <begin position="146"/>
        <end position="149"/>
    </location>
    <ligand>
        <name>GTP</name>
        <dbReference type="ChEBI" id="CHEBI:37565"/>
    </ligand>
</feature>
<keyword id="KW-0963">Cytoplasm</keyword>
<keyword id="KW-0251">Elongation factor</keyword>
<keyword id="KW-0342">GTP-binding</keyword>
<keyword id="KW-0378">Hydrolase</keyword>
<keyword id="KW-0460">Magnesium</keyword>
<keyword id="KW-0479">Metal-binding</keyword>
<keyword id="KW-0547">Nucleotide-binding</keyword>
<keyword id="KW-0648">Protein biosynthesis</keyword>
<keyword id="KW-1185">Reference proteome</keyword>
<reference key="1">
    <citation type="journal article" date="2002" name="Genome Res.">
        <title>The genome of Methanosarcina acetivorans reveals extensive metabolic and physiological diversity.</title>
        <authorList>
            <person name="Galagan J.E."/>
            <person name="Nusbaum C."/>
            <person name="Roy A."/>
            <person name="Endrizzi M.G."/>
            <person name="Macdonald P."/>
            <person name="FitzHugh W."/>
            <person name="Calvo S."/>
            <person name="Engels R."/>
            <person name="Smirnov S."/>
            <person name="Atnoor D."/>
            <person name="Brown A."/>
            <person name="Allen N."/>
            <person name="Naylor J."/>
            <person name="Stange-Thomann N."/>
            <person name="DeArellano K."/>
            <person name="Johnson R."/>
            <person name="Linton L."/>
            <person name="McEwan P."/>
            <person name="McKernan K."/>
            <person name="Talamas J."/>
            <person name="Tirrell A."/>
            <person name="Ye W."/>
            <person name="Zimmer A."/>
            <person name="Barber R.D."/>
            <person name="Cann I."/>
            <person name="Graham D.E."/>
            <person name="Grahame D.A."/>
            <person name="Guss A.M."/>
            <person name="Hedderich R."/>
            <person name="Ingram-Smith C."/>
            <person name="Kuettner H.C."/>
            <person name="Krzycki J.A."/>
            <person name="Leigh J.A."/>
            <person name="Li W."/>
            <person name="Liu J."/>
            <person name="Mukhopadhyay B."/>
            <person name="Reeve J.N."/>
            <person name="Smith K."/>
            <person name="Springer T.A."/>
            <person name="Umayam L.A."/>
            <person name="White O."/>
            <person name="White R.H."/>
            <person name="de Macario E.C."/>
            <person name="Ferry J.G."/>
            <person name="Jarrell K.F."/>
            <person name="Jing H."/>
            <person name="Macario A.J.L."/>
            <person name="Paulsen I.T."/>
            <person name="Pritchett M."/>
            <person name="Sowers K.R."/>
            <person name="Swanson R.V."/>
            <person name="Zinder S.H."/>
            <person name="Lander E."/>
            <person name="Metcalf W.W."/>
            <person name="Birren B."/>
        </authorList>
    </citation>
    <scope>NUCLEOTIDE SEQUENCE [LARGE SCALE GENOMIC DNA]</scope>
    <source>
        <strain>ATCC 35395 / DSM 2834 / JCM 12185 / C2A</strain>
    </source>
</reference>
<organism>
    <name type="scientific">Methanosarcina acetivorans (strain ATCC 35395 / DSM 2834 / JCM 12185 / C2A)</name>
    <dbReference type="NCBI Taxonomy" id="188937"/>
    <lineage>
        <taxon>Archaea</taxon>
        <taxon>Methanobacteriati</taxon>
        <taxon>Methanobacteriota</taxon>
        <taxon>Stenosarchaea group</taxon>
        <taxon>Methanomicrobia</taxon>
        <taxon>Methanosarcinales</taxon>
        <taxon>Methanosarcinaceae</taxon>
        <taxon>Methanosarcina</taxon>
    </lineage>
</organism>
<protein>
    <recommendedName>
        <fullName evidence="2">Elongation factor 1-alpha</fullName>
        <shortName evidence="2">EF-1-alpha</shortName>
        <ecNumber evidence="2">3.6.5.3</ecNumber>
    </recommendedName>
    <alternativeName>
        <fullName evidence="2">Elongation factor Tu</fullName>
        <shortName evidence="2">EF-Tu</shortName>
    </alternativeName>
</protein>
<dbReference type="EC" id="3.6.5.3" evidence="2"/>
<dbReference type="EMBL" id="AE010299">
    <property type="protein sequence ID" value="AAM04675.1"/>
    <property type="molecule type" value="Genomic_DNA"/>
</dbReference>
<dbReference type="RefSeq" id="WP_011021277.1">
    <property type="nucleotide sequence ID" value="NC_003552.1"/>
</dbReference>
<dbReference type="SMR" id="Q8TRC4"/>
<dbReference type="FunCoup" id="Q8TRC4">
    <property type="interactions" value="120"/>
</dbReference>
<dbReference type="STRING" id="188937.MA_1256"/>
<dbReference type="EnsemblBacteria" id="AAM04675">
    <property type="protein sequence ID" value="AAM04675"/>
    <property type="gene ID" value="MA_1256"/>
</dbReference>
<dbReference type="GeneID" id="1473144"/>
<dbReference type="KEGG" id="mac:MA_1256"/>
<dbReference type="HOGENOM" id="CLU_007265_3_5_2"/>
<dbReference type="InParanoid" id="Q8TRC4"/>
<dbReference type="OrthoDB" id="371718at2157"/>
<dbReference type="PhylomeDB" id="Q8TRC4"/>
<dbReference type="Proteomes" id="UP000002487">
    <property type="component" value="Chromosome"/>
</dbReference>
<dbReference type="GO" id="GO:0005737">
    <property type="term" value="C:cytoplasm"/>
    <property type="evidence" value="ECO:0007669"/>
    <property type="project" value="UniProtKB-SubCell"/>
</dbReference>
<dbReference type="GO" id="GO:0005525">
    <property type="term" value="F:GTP binding"/>
    <property type="evidence" value="ECO:0007669"/>
    <property type="project" value="UniProtKB-UniRule"/>
</dbReference>
<dbReference type="GO" id="GO:0003924">
    <property type="term" value="F:GTPase activity"/>
    <property type="evidence" value="ECO:0007669"/>
    <property type="project" value="InterPro"/>
</dbReference>
<dbReference type="GO" id="GO:0003746">
    <property type="term" value="F:translation elongation factor activity"/>
    <property type="evidence" value="ECO:0007669"/>
    <property type="project" value="UniProtKB-UniRule"/>
</dbReference>
<dbReference type="CDD" id="cd01883">
    <property type="entry name" value="EF1_alpha"/>
    <property type="match status" value="1"/>
</dbReference>
<dbReference type="CDD" id="cd03693">
    <property type="entry name" value="EF1_alpha_II"/>
    <property type="match status" value="1"/>
</dbReference>
<dbReference type="CDD" id="cd03705">
    <property type="entry name" value="EF1_alpha_III"/>
    <property type="match status" value="1"/>
</dbReference>
<dbReference type="FunFam" id="2.40.30.10:FF:000003">
    <property type="entry name" value="Elongation factor 1-alpha"/>
    <property type="match status" value="1"/>
</dbReference>
<dbReference type="FunFam" id="2.40.30.10:FF:000005">
    <property type="entry name" value="Elongation factor 1-alpha"/>
    <property type="match status" value="1"/>
</dbReference>
<dbReference type="FunFam" id="3.40.50.300:FF:000204">
    <property type="entry name" value="Translation elongation factor Tu"/>
    <property type="match status" value="1"/>
</dbReference>
<dbReference type="Gene3D" id="3.40.50.300">
    <property type="entry name" value="P-loop containing nucleotide triphosphate hydrolases"/>
    <property type="match status" value="1"/>
</dbReference>
<dbReference type="Gene3D" id="2.40.30.10">
    <property type="entry name" value="Translation factors"/>
    <property type="match status" value="2"/>
</dbReference>
<dbReference type="HAMAP" id="MF_00118_A">
    <property type="entry name" value="EF_Tu_A"/>
    <property type="match status" value="1"/>
</dbReference>
<dbReference type="InterPro" id="IPR004161">
    <property type="entry name" value="EFTu-like_2"/>
</dbReference>
<dbReference type="InterPro" id="IPR031157">
    <property type="entry name" value="G_TR_CS"/>
</dbReference>
<dbReference type="InterPro" id="IPR054696">
    <property type="entry name" value="GTP-eEF1A_C"/>
</dbReference>
<dbReference type="InterPro" id="IPR027417">
    <property type="entry name" value="P-loop_NTPase"/>
</dbReference>
<dbReference type="InterPro" id="IPR005225">
    <property type="entry name" value="Small_GTP-bd"/>
</dbReference>
<dbReference type="InterPro" id="IPR000795">
    <property type="entry name" value="T_Tr_GTP-bd_dom"/>
</dbReference>
<dbReference type="InterPro" id="IPR050100">
    <property type="entry name" value="TRAFAC_GTPase_members"/>
</dbReference>
<dbReference type="InterPro" id="IPR009000">
    <property type="entry name" value="Transl_B-barrel_sf"/>
</dbReference>
<dbReference type="InterPro" id="IPR009001">
    <property type="entry name" value="Transl_elong_EF1A/Init_IF2_C"/>
</dbReference>
<dbReference type="InterPro" id="IPR004539">
    <property type="entry name" value="Transl_elong_EF1A_euk/arc"/>
</dbReference>
<dbReference type="NCBIfam" id="TIGR00483">
    <property type="entry name" value="EF-1_alpha"/>
    <property type="match status" value="1"/>
</dbReference>
<dbReference type="NCBIfam" id="NF008969">
    <property type="entry name" value="PRK12317.1"/>
    <property type="match status" value="1"/>
</dbReference>
<dbReference type="NCBIfam" id="TIGR00231">
    <property type="entry name" value="small_GTP"/>
    <property type="match status" value="1"/>
</dbReference>
<dbReference type="PANTHER" id="PTHR23115">
    <property type="entry name" value="TRANSLATION FACTOR"/>
    <property type="match status" value="1"/>
</dbReference>
<dbReference type="Pfam" id="PF22594">
    <property type="entry name" value="GTP-eEF1A_C"/>
    <property type="match status" value="1"/>
</dbReference>
<dbReference type="Pfam" id="PF00009">
    <property type="entry name" value="GTP_EFTU"/>
    <property type="match status" value="1"/>
</dbReference>
<dbReference type="Pfam" id="PF03144">
    <property type="entry name" value="GTP_EFTU_D2"/>
    <property type="match status" value="1"/>
</dbReference>
<dbReference type="PRINTS" id="PR00315">
    <property type="entry name" value="ELONGATNFCT"/>
</dbReference>
<dbReference type="SUPFAM" id="SSF50465">
    <property type="entry name" value="EF-Tu/eEF-1alpha/eIF2-gamma C-terminal domain"/>
    <property type="match status" value="1"/>
</dbReference>
<dbReference type="SUPFAM" id="SSF52540">
    <property type="entry name" value="P-loop containing nucleoside triphosphate hydrolases"/>
    <property type="match status" value="1"/>
</dbReference>
<dbReference type="SUPFAM" id="SSF50447">
    <property type="entry name" value="Translation proteins"/>
    <property type="match status" value="1"/>
</dbReference>
<dbReference type="PROSITE" id="PS00301">
    <property type="entry name" value="G_TR_1"/>
    <property type="match status" value="1"/>
</dbReference>
<dbReference type="PROSITE" id="PS51722">
    <property type="entry name" value="G_TR_2"/>
    <property type="match status" value="1"/>
</dbReference>
<proteinExistence type="inferred from homology"/>
<evidence type="ECO:0000250" key="1"/>
<evidence type="ECO:0000255" key="2">
    <source>
        <dbReference type="HAMAP-Rule" id="MF_00118"/>
    </source>
</evidence>
<name>EF1A_METAC</name>
<comment type="function">
    <text evidence="2">GTP hydrolase that promotes the GTP-dependent binding of aminoacyl-tRNA to the A-site of ribosomes during protein biosynthesis.</text>
</comment>
<comment type="catalytic activity">
    <reaction evidence="2">
        <text>GTP + H2O = GDP + phosphate + H(+)</text>
        <dbReference type="Rhea" id="RHEA:19669"/>
        <dbReference type="ChEBI" id="CHEBI:15377"/>
        <dbReference type="ChEBI" id="CHEBI:15378"/>
        <dbReference type="ChEBI" id="CHEBI:37565"/>
        <dbReference type="ChEBI" id="CHEBI:43474"/>
        <dbReference type="ChEBI" id="CHEBI:58189"/>
        <dbReference type="EC" id="3.6.5.3"/>
    </reaction>
    <physiologicalReaction direction="left-to-right" evidence="2">
        <dbReference type="Rhea" id="RHEA:19670"/>
    </physiologicalReaction>
</comment>
<comment type="subcellular location">
    <subcellularLocation>
        <location evidence="2">Cytoplasm</location>
    </subcellularLocation>
</comment>
<comment type="similarity">
    <text evidence="2">Belongs to the TRAFAC class translation factor GTPase superfamily. Classic translation factor GTPase family. EF-Tu/EF-1A subfamily.</text>
</comment>
<gene>
    <name evidence="2" type="primary">tuf</name>
    <name type="synonym">ef1A</name>
    <name type="ordered locus">MA_1256</name>
</gene>
<accession>Q8TRC4</accession>
<sequence>MAADKPHMNLAVIGHIDHGKSTLVGRLMYEAGAVPAHIIEKYKEEAKQKGKESFAFAWVMDSLKEERERGITIDIAHKRFDTPKYYFTVVDCPGHRDFVKNMITGASQADAAILVVAAPDGVMAQTKEHIFLSRTLGINQLIIAINKMDAVEYSEAKYKEVVEQVSGLLKMIGFKPANIPFIPTSAFMGDNITKLSEKTPWYKGPVIMQALDELKEPEKPSTLPLRIPVEDAYTISGIGTVPVGRVETGVMKKGDKVIFMPGGAGGEVKSIEMHHEEIPQAYPGDNIGWNVRGIGKNDVRRGDVCGHTDNPPKVADEFVGQIVVLQHPSAITAGYTPVFHAHTSQIACQLISLDKKLDPKTGQVKEEHPTFIKAGDAAIVTIKPTKPMVIEPVKEIPQLGRFAIRDMGMTIAAGMCMSVKQK</sequence>